<name>INS_CALMI</name>
<reference key="1">
    <citation type="journal article" date="1997" name="Gen. Comp. Endocrinol.">
        <title>Elephantfish proinsulin possesses a monobasic processing site.</title>
        <authorList>
            <person name="Gieseg M.A."/>
            <person name="Swarbrick P.A."/>
            <person name="Perko L."/>
            <person name="Powell R.J."/>
            <person name="Cutfield J.F."/>
        </authorList>
    </citation>
    <scope>NUCLEOTIDE SEQUENCE [GENOMIC DNA] OF 16-89</scope>
</reference>
<reference key="2">
    <citation type="journal article" date="1989" name="Biochem. J.">
        <title>Isolation and structural characterization of insulin and glucagon from the holocephalan species Callorhynchus milii (elephantfish).</title>
        <authorList>
            <person name="Berks B.C."/>
            <person name="Marshall C.J."/>
            <person name="Carne A."/>
            <person name="Galloway S.M."/>
            <person name="Cutfield J.F."/>
        </authorList>
    </citation>
    <scope>PROTEIN SEQUENCE OF 1-31 AND 69-89</scope>
</reference>
<comment type="function">
    <text>Insulin decreases blood glucose concentration. It increases cell permeability to monosaccharides, amino acids and fatty acids. It accelerates glycolysis, the pentose phosphate cycle, and glycogen synthesis in liver.</text>
</comment>
<comment type="subunit">
    <text>Heterodimer of a B chain and an A chain linked by two disulfide bonds.</text>
</comment>
<comment type="subcellular location">
    <subcellularLocation>
        <location>Secreted</location>
    </subcellularLocation>
</comment>
<comment type="similarity">
    <text evidence="2">Belongs to the insulin family.</text>
</comment>
<organism>
    <name type="scientific">Callorhinchus milii</name>
    <name type="common">Ghost shark</name>
    <dbReference type="NCBI Taxonomy" id="7868"/>
    <lineage>
        <taxon>Eukaryota</taxon>
        <taxon>Metazoa</taxon>
        <taxon>Chordata</taxon>
        <taxon>Craniata</taxon>
        <taxon>Vertebrata</taxon>
        <taxon>Chondrichthyes</taxon>
        <taxon>Holocephali</taxon>
        <taxon>Chimaeriformes</taxon>
        <taxon>Callorhinchidae</taxon>
        <taxon>Callorhinchus</taxon>
    </lineage>
</organism>
<dbReference type="EMBL" id="U82395">
    <property type="protein sequence ID" value="AAB64356.1"/>
    <property type="molecule type" value="Genomic_DNA"/>
</dbReference>
<dbReference type="PIR" id="S06128">
    <property type="entry name" value="INEN"/>
</dbReference>
<dbReference type="SMR" id="P13190"/>
<dbReference type="FunCoup" id="P13190">
    <property type="interactions" value="112"/>
</dbReference>
<dbReference type="STRING" id="7868.ENSCMIP00000017634"/>
<dbReference type="InParanoid" id="P13190"/>
<dbReference type="Proteomes" id="UP000314986">
    <property type="component" value="Unassembled WGS sequence"/>
</dbReference>
<dbReference type="GO" id="GO:0005615">
    <property type="term" value="C:extracellular space"/>
    <property type="evidence" value="ECO:0007669"/>
    <property type="project" value="TreeGrafter"/>
</dbReference>
<dbReference type="GO" id="GO:0005179">
    <property type="term" value="F:hormone activity"/>
    <property type="evidence" value="ECO:0007669"/>
    <property type="project" value="UniProtKB-KW"/>
</dbReference>
<dbReference type="GO" id="GO:0006006">
    <property type="term" value="P:glucose metabolic process"/>
    <property type="evidence" value="ECO:0007669"/>
    <property type="project" value="UniProtKB-KW"/>
</dbReference>
<dbReference type="CDD" id="cd04367">
    <property type="entry name" value="IlGF_insulin_like"/>
    <property type="match status" value="1"/>
</dbReference>
<dbReference type="FunFam" id="1.10.100.10:FF:000003">
    <property type="entry name" value="Insulin"/>
    <property type="match status" value="1"/>
</dbReference>
<dbReference type="Gene3D" id="1.10.100.10">
    <property type="entry name" value="Insulin-like"/>
    <property type="match status" value="1"/>
</dbReference>
<dbReference type="InterPro" id="IPR004825">
    <property type="entry name" value="Insulin"/>
</dbReference>
<dbReference type="InterPro" id="IPR016179">
    <property type="entry name" value="Insulin-like"/>
</dbReference>
<dbReference type="InterPro" id="IPR036438">
    <property type="entry name" value="Insulin-like_sf"/>
</dbReference>
<dbReference type="InterPro" id="IPR022353">
    <property type="entry name" value="Insulin_CS"/>
</dbReference>
<dbReference type="InterPro" id="IPR022352">
    <property type="entry name" value="Insulin_family"/>
</dbReference>
<dbReference type="PANTHER" id="PTHR11454:SF9">
    <property type="entry name" value="INSULIN"/>
    <property type="match status" value="1"/>
</dbReference>
<dbReference type="PANTHER" id="PTHR11454">
    <property type="entry name" value="INSULIN/INSULIN GROWTH FACTOR"/>
    <property type="match status" value="1"/>
</dbReference>
<dbReference type="Pfam" id="PF00049">
    <property type="entry name" value="Insulin"/>
    <property type="match status" value="1"/>
</dbReference>
<dbReference type="PRINTS" id="PR00277">
    <property type="entry name" value="INSULIN"/>
</dbReference>
<dbReference type="PRINTS" id="PR00276">
    <property type="entry name" value="INSULINFAMLY"/>
</dbReference>
<dbReference type="SMART" id="SM00078">
    <property type="entry name" value="IlGF"/>
    <property type="match status" value="1"/>
</dbReference>
<dbReference type="SUPFAM" id="SSF56994">
    <property type="entry name" value="Insulin-like"/>
    <property type="match status" value="1"/>
</dbReference>
<dbReference type="PROSITE" id="PS00262">
    <property type="entry name" value="INSULIN"/>
    <property type="match status" value="1"/>
</dbReference>
<gene>
    <name type="primary">ins</name>
</gene>
<keyword id="KW-0119">Carbohydrate metabolism</keyword>
<keyword id="KW-0165">Cleavage on pair of basic residues</keyword>
<keyword id="KW-0903">Direct protein sequencing</keyword>
<keyword id="KW-1015">Disulfide bond</keyword>
<keyword id="KW-0313">Glucose metabolism</keyword>
<keyword id="KW-0372">Hormone</keyword>
<keyword id="KW-1185">Reference proteome</keyword>
<keyword id="KW-0964">Secreted</keyword>
<protein>
    <recommendedName>
        <fullName>Insulin</fullName>
    </recommendedName>
    <component>
        <recommendedName>
            <fullName>Insulin B chain</fullName>
        </recommendedName>
    </component>
    <component>
        <recommendedName>
            <fullName>Insulin A chain</fullName>
        </recommendedName>
    </component>
</protein>
<proteinExistence type="evidence at protein level"/>
<sequence>VPTQRLCGSHLVDALYFVCGERGFFYSPKQIRDVGPLSAFRDLEPPLDTEMEDRFPYRQQLAGSKMKRGIVEQCCHNTCSLVNLEGYCN</sequence>
<accession>P13190</accession>
<accession>O42485</accession>
<evidence type="ECO:0000250" key="1"/>
<evidence type="ECO:0000305" key="2"/>
<feature type="peptide" id="PRO_0000015772" description="Insulin B chain">
    <location>
        <begin position="1"/>
        <end position="31"/>
    </location>
</feature>
<feature type="propeptide" id="PRO_0000015773" description="C peptide">
    <location>
        <begin position="33"/>
        <end position="66"/>
    </location>
</feature>
<feature type="peptide" id="PRO_0000015774" description="Insulin A chain">
    <location>
        <begin position="69"/>
        <end position="89"/>
    </location>
</feature>
<feature type="disulfide bond" description="Interchain (between B and A chains)" evidence="1">
    <location>
        <begin position="7"/>
        <end position="75"/>
    </location>
</feature>
<feature type="disulfide bond" description="Interchain (between B and A chains)" evidence="1">
    <location>
        <begin position="19"/>
        <end position="88"/>
    </location>
</feature>
<feature type="disulfide bond" evidence="1">
    <location>
        <begin position="74"/>
        <end position="79"/>
    </location>
</feature>